<name>YIPF3_XENLA</name>
<reference key="1">
    <citation type="submission" date="2006-10" db="EMBL/GenBank/DDBJ databases">
        <authorList>
            <consortium name="NIH - Xenopus Gene Collection (XGC) project"/>
        </authorList>
    </citation>
    <scope>NUCLEOTIDE SEQUENCE [LARGE SCALE MRNA]</scope>
    <source>
        <tissue>Testis</tissue>
    </source>
</reference>
<keyword id="KW-1003">Cell membrane</keyword>
<keyword id="KW-0963">Cytoplasm</keyword>
<keyword id="KW-0221">Differentiation</keyword>
<keyword id="KW-0325">Glycoprotein</keyword>
<keyword id="KW-0333">Golgi apparatus</keyword>
<keyword id="KW-0472">Membrane</keyword>
<keyword id="KW-1185">Reference proteome</keyword>
<keyword id="KW-0812">Transmembrane</keyword>
<keyword id="KW-1133">Transmembrane helix</keyword>
<protein>
    <recommendedName>
        <fullName>Protein YIPF3</fullName>
    </recommendedName>
    <alternativeName>
        <fullName>YIP1 family member 3</fullName>
    </alternativeName>
</protein>
<gene>
    <name type="primary">yipf3</name>
</gene>
<accession>Q3B8G4</accession>
<accession>Q08B82</accession>
<sequence>MANSSGSSRNLTAADWGGFDDNMQSGGGAAVIDMENMDDTSGSSFEDMGEIHQHMKEEEEEVEGEGVPEDGEEDGAFLGMKGVQGQLGRQVADEMWQAGKRQASKAFNLYANIDILRPYFDVEPIQVRHRLLESMIPVKMISFPQKIAGELYGPLMLVFTMVAILLHGMKSSGTIIREGTLMGTAIGTCFGYWLGVSSFIYFLAYLCNAQITMLQTLSLLGYGLFGHCIVLFITYNIHFHSLFYIFWLCIGGLSTLRMVAVLLSRTVGHTQRLIVCGTMAALHMLFLLYLHFAYHKVVEGILDTLDGQNVPLPIQRVARDLPVGPNTVLNATVQVLLAHSR</sequence>
<proteinExistence type="evidence at transcript level"/>
<comment type="function">
    <text evidence="1">Involved in the maintenance of the Golgi structure. May play a role in hematopoiesis (By similarity).</text>
</comment>
<comment type="subcellular location">
    <subcellularLocation>
        <location evidence="1">Cell membrane</location>
        <topology>Multi-pass membrane protein</topology>
    </subcellularLocation>
    <subcellularLocation>
        <location evidence="1">Golgi apparatus</location>
        <location evidence="1">cis-Golgi network membrane</location>
        <topology>Multi-pass membrane protein</topology>
    </subcellularLocation>
    <subcellularLocation>
        <location evidence="1">Cytoplasm</location>
    </subcellularLocation>
</comment>
<comment type="similarity">
    <text evidence="5">Belongs to the YIP1 family.</text>
</comment>
<evidence type="ECO:0000250" key="1"/>
<evidence type="ECO:0000250" key="2">
    <source>
        <dbReference type="UniProtKB" id="Q9GZM5"/>
    </source>
</evidence>
<evidence type="ECO:0000255" key="3"/>
<evidence type="ECO:0000256" key="4">
    <source>
        <dbReference type="SAM" id="MobiDB-lite"/>
    </source>
</evidence>
<evidence type="ECO:0000305" key="5"/>
<feature type="chain" id="PRO_0000244451" description="Protein YIPF3">
    <location>
        <begin position="1"/>
        <end position="341"/>
    </location>
</feature>
<feature type="topological domain" description="Cytoplasmic" evidence="2">
    <location>
        <begin position="1"/>
        <end position="146"/>
    </location>
</feature>
<feature type="transmembrane region" description="Helical" evidence="3">
    <location>
        <begin position="147"/>
        <end position="167"/>
    </location>
</feature>
<feature type="topological domain" description="Lumenal" evidence="5">
    <location>
        <begin position="168"/>
        <end position="185"/>
    </location>
</feature>
<feature type="transmembrane region" description="Helical" evidence="3">
    <location>
        <begin position="186"/>
        <end position="206"/>
    </location>
</feature>
<feature type="topological domain" description="Cytoplasmic" evidence="5">
    <location>
        <begin position="207"/>
        <end position="212"/>
    </location>
</feature>
<feature type="transmembrane region" description="Helical" evidence="3">
    <location>
        <begin position="213"/>
        <end position="233"/>
    </location>
</feature>
<feature type="topological domain" description="Lumenal" evidence="5">
    <location>
        <begin position="234"/>
        <end position="242"/>
    </location>
</feature>
<feature type="transmembrane region" description="Helical" evidence="3">
    <location>
        <begin position="243"/>
        <end position="263"/>
    </location>
</feature>
<feature type="topological domain" description="Cytoplasmic" evidence="5">
    <location>
        <begin position="264"/>
        <end position="272"/>
    </location>
</feature>
<feature type="transmembrane region" description="Helical" evidence="3">
    <location>
        <begin position="273"/>
        <end position="293"/>
    </location>
</feature>
<feature type="topological domain" description="Lumenal" evidence="2">
    <location>
        <begin position="294"/>
        <end position="341"/>
    </location>
</feature>
<feature type="region of interest" description="Disordered" evidence="4">
    <location>
        <begin position="26"/>
        <end position="46"/>
    </location>
</feature>
<feature type="glycosylation site" description="N-linked (GlcNAc...) asparagine" evidence="3">
    <location>
        <position position="330"/>
    </location>
</feature>
<organism>
    <name type="scientific">Xenopus laevis</name>
    <name type="common">African clawed frog</name>
    <dbReference type="NCBI Taxonomy" id="8355"/>
    <lineage>
        <taxon>Eukaryota</taxon>
        <taxon>Metazoa</taxon>
        <taxon>Chordata</taxon>
        <taxon>Craniata</taxon>
        <taxon>Vertebrata</taxon>
        <taxon>Euteleostomi</taxon>
        <taxon>Amphibia</taxon>
        <taxon>Batrachia</taxon>
        <taxon>Anura</taxon>
        <taxon>Pipoidea</taxon>
        <taxon>Pipidae</taxon>
        <taxon>Xenopodinae</taxon>
        <taxon>Xenopus</taxon>
        <taxon>Xenopus</taxon>
    </lineage>
</organism>
<dbReference type="EMBL" id="BC106456">
    <property type="protein sequence ID" value="AAI06457.1"/>
    <property type="molecule type" value="mRNA"/>
</dbReference>
<dbReference type="EMBL" id="BC124836">
    <property type="protein sequence ID" value="AAI24837.1"/>
    <property type="molecule type" value="mRNA"/>
</dbReference>
<dbReference type="RefSeq" id="NP_001089118.1">
    <property type="nucleotide sequence ID" value="NM_001095649.1"/>
</dbReference>
<dbReference type="GlyCosmos" id="Q3B8G4">
    <property type="glycosylation" value="1 site, No reported glycans"/>
</dbReference>
<dbReference type="DNASU" id="733391"/>
<dbReference type="GeneID" id="733391"/>
<dbReference type="KEGG" id="xla:733391"/>
<dbReference type="AGR" id="Xenbase:XB-GENE-6253246"/>
<dbReference type="CTD" id="733391"/>
<dbReference type="Xenbase" id="XB-GENE-6253246">
    <property type="gene designation" value="yipf3.L"/>
</dbReference>
<dbReference type="OMA" id="ADHRVEE"/>
<dbReference type="OrthoDB" id="10256463at2759"/>
<dbReference type="Proteomes" id="UP000186698">
    <property type="component" value="Chromosome 5L"/>
</dbReference>
<dbReference type="Bgee" id="733391">
    <property type="expression patterns" value="Expressed in internal ear and 19 other cell types or tissues"/>
</dbReference>
<dbReference type="GO" id="GO:0005794">
    <property type="term" value="C:Golgi apparatus"/>
    <property type="evidence" value="ECO:0000318"/>
    <property type="project" value="GO_Central"/>
</dbReference>
<dbReference type="GO" id="GO:0005886">
    <property type="term" value="C:plasma membrane"/>
    <property type="evidence" value="ECO:0007669"/>
    <property type="project" value="UniProtKB-SubCell"/>
</dbReference>
<dbReference type="GO" id="GO:0030154">
    <property type="term" value="P:cell differentiation"/>
    <property type="evidence" value="ECO:0007669"/>
    <property type="project" value="UniProtKB-KW"/>
</dbReference>
<dbReference type="InterPro" id="IPR051521">
    <property type="entry name" value="tRNA_Mod/Golgi_Maint"/>
</dbReference>
<dbReference type="PANTHER" id="PTHR15627">
    <property type="entry name" value="NATURAL KILLER CELL-SPECIFIC ANTIGEN KLIP1"/>
    <property type="match status" value="1"/>
</dbReference>
<dbReference type="PANTHER" id="PTHR15627:SF14">
    <property type="entry name" value="PROTEIN YIPF3"/>
    <property type="match status" value="1"/>
</dbReference>